<name>RL11_CHRVO</name>
<accession>P60100</accession>
<accession>Q7NQE2</accession>
<organism>
    <name type="scientific">Chromobacterium violaceum (strain ATCC 12472 / DSM 30191 / JCM 1249 / CCUG 213 / NBRC 12614 / NCIMB 9131 / NCTC 9757 / MK)</name>
    <dbReference type="NCBI Taxonomy" id="243365"/>
    <lineage>
        <taxon>Bacteria</taxon>
        <taxon>Pseudomonadati</taxon>
        <taxon>Pseudomonadota</taxon>
        <taxon>Betaproteobacteria</taxon>
        <taxon>Neisseriales</taxon>
        <taxon>Chromobacteriaceae</taxon>
        <taxon>Chromobacterium</taxon>
    </lineage>
</organism>
<protein>
    <recommendedName>
        <fullName evidence="1">Large ribosomal subunit protein uL11</fullName>
    </recommendedName>
    <alternativeName>
        <fullName evidence="2">50S ribosomal protein L11</fullName>
    </alternativeName>
</protein>
<comment type="function">
    <text evidence="1">Forms part of the ribosomal stalk which helps the ribosome interact with GTP-bound translation factors.</text>
</comment>
<comment type="subunit">
    <text evidence="1">Part of the ribosomal stalk of the 50S ribosomal subunit. Interacts with L10 and the large rRNA to form the base of the stalk. L10 forms an elongated spine to which L12 dimers bind in a sequential fashion forming a multimeric L10(L12)X complex.</text>
</comment>
<comment type="PTM">
    <text evidence="1">One or more lysine residues are methylated.</text>
</comment>
<comment type="similarity">
    <text evidence="1">Belongs to the universal ribosomal protein uL11 family.</text>
</comment>
<gene>
    <name evidence="1" type="primary">rplK</name>
    <name type="ordered locus">CV_4197</name>
</gene>
<sequence length="143" mass="14955">MAKKIVGYIKLQVPAGKANPSPPIGPALGQRGLNIMEFCKAFNAQTQGMEPGMPIPVVITAYADKSFTFTMKTPPATFLLKKAAGIKSGSAKAHVDKVGKVTRAQLEEIAKTKQADLTAADLDAAVRTIAGSARSMGLEVEGV</sequence>
<dbReference type="EMBL" id="AE016825">
    <property type="protein sequence ID" value="AAQ61857.1"/>
    <property type="molecule type" value="Genomic_DNA"/>
</dbReference>
<dbReference type="RefSeq" id="WP_011137744.1">
    <property type="nucleotide sequence ID" value="NC_005085.1"/>
</dbReference>
<dbReference type="SMR" id="P60100"/>
<dbReference type="STRING" id="243365.CV_4197"/>
<dbReference type="GeneID" id="66366330"/>
<dbReference type="KEGG" id="cvi:CV_4197"/>
<dbReference type="eggNOG" id="COG0080">
    <property type="taxonomic scope" value="Bacteria"/>
</dbReference>
<dbReference type="HOGENOM" id="CLU_074237_2_0_4"/>
<dbReference type="OrthoDB" id="9802408at2"/>
<dbReference type="Proteomes" id="UP000001424">
    <property type="component" value="Chromosome"/>
</dbReference>
<dbReference type="GO" id="GO:0022625">
    <property type="term" value="C:cytosolic large ribosomal subunit"/>
    <property type="evidence" value="ECO:0007669"/>
    <property type="project" value="TreeGrafter"/>
</dbReference>
<dbReference type="GO" id="GO:0070180">
    <property type="term" value="F:large ribosomal subunit rRNA binding"/>
    <property type="evidence" value="ECO:0007669"/>
    <property type="project" value="UniProtKB-UniRule"/>
</dbReference>
<dbReference type="GO" id="GO:0003735">
    <property type="term" value="F:structural constituent of ribosome"/>
    <property type="evidence" value="ECO:0007669"/>
    <property type="project" value="InterPro"/>
</dbReference>
<dbReference type="GO" id="GO:0006412">
    <property type="term" value="P:translation"/>
    <property type="evidence" value="ECO:0007669"/>
    <property type="project" value="UniProtKB-UniRule"/>
</dbReference>
<dbReference type="CDD" id="cd00349">
    <property type="entry name" value="Ribosomal_L11"/>
    <property type="match status" value="1"/>
</dbReference>
<dbReference type="FunFam" id="1.10.10.250:FF:000001">
    <property type="entry name" value="50S ribosomal protein L11"/>
    <property type="match status" value="1"/>
</dbReference>
<dbReference type="FunFam" id="3.30.1550.10:FF:000001">
    <property type="entry name" value="50S ribosomal protein L11"/>
    <property type="match status" value="1"/>
</dbReference>
<dbReference type="Gene3D" id="1.10.10.250">
    <property type="entry name" value="Ribosomal protein L11, C-terminal domain"/>
    <property type="match status" value="1"/>
</dbReference>
<dbReference type="Gene3D" id="3.30.1550.10">
    <property type="entry name" value="Ribosomal protein L11/L12, N-terminal domain"/>
    <property type="match status" value="1"/>
</dbReference>
<dbReference type="HAMAP" id="MF_00736">
    <property type="entry name" value="Ribosomal_uL11"/>
    <property type="match status" value="1"/>
</dbReference>
<dbReference type="InterPro" id="IPR000911">
    <property type="entry name" value="Ribosomal_uL11"/>
</dbReference>
<dbReference type="InterPro" id="IPR006519">
    <property type="entry name" value="Ribosomal_uL11_bac-typ"/>
</dbReference>
<dbReference type="InterPro" id="IPR020783">
    <property type="entry name" value="Ribosomal_uL11_C"/>
</dbReference>
<dbReference type="InterPro" id="IPR036769">
    <property type="entry name" value="Ribosomal_uL11_C_sf"/>
</dbReference>
<dbReference type="InterPro" id="IPR020785">
    <property type="entry name" value="Ribosomal_uL11_CS"/>
</dbReference>
<dbReference type="InterPro" id="IPR020784">
    <property type="entry name" value="Ribosomal_uL11_N"/>
</dbReference>
<dbReference type="InterPro" id="IPR036796">
    <property type="entry name" value="Ribosomal_uL11_N_sf"/>
</dbReference>
<dbReference type="NCBIfam" id="TIGR01632">
    <property type="entry name" value="L11_bact"/>
    <property type="match status" value="1"/>
</dbReference>
<dbReference type="PANTHER" id="PTHR11661">
    <property type="entry name" value="60S RIBOSOMAL PROTEIN L12"/>
    <property type="match status" value="1"/>
</dbReference>
<dbReference type="PANTHER" id="PTHR11661:SF1">
    <property type="entry name" value="LARGE RIBOSOMAL SUBUNIT PROTEIN UL11M"/>
    <property type="match status" value="1"/>
</dbReference>
<dbReference type="Pfam" id="PF00298">
    <property type="entry name" value="Ribosomal_L11"/>
    <property type="match status" value="1"/>
</dbReference>
<dbReference type="Pfam" id="PF03946">
    <property type="entry name" value="Ribosomal_L11_N"/>
    <property type="match status" value="1"/>
</dbReference>
<dbReference type="SMART" id="SM00649">
    <property type="entry name" value="RL11"/>
    <property type="match status" value="1"/>
</dbReference>
<dbReference type="SUPFAM" id="SSF54747">
    <property type="entry name" value="Ribosomal L11/L12e N-terminal domain"/>
    <property type="match status" value="1"/>
</dbReference>
<dbReference type="SUPFAM" id="SSF46906">
    <property type="entry name" value="Ribosomal protein L11, C-terminal domain"/>
    <property type="match status" value="1"/>
</dbReference>
<dbReference type="PROSITE" id="PS00359">
    <property type="entry name" value="RIBOSOMAL_L11"/>
    <property type="match status" value="1"/>
</dbReference>
<evidence type="ECO:0000255" key="1">
    <source>
        <dbReference type="HAMAP-Rule" id="MF_00736"/>
    </source>
</evidence>
<evidence type="ECO:0000305" key="2"/>
<feature type="chain" id="PRO_0000104272" description="Large ribosomal subunit protein uL11">
    <location>
        <begin position="1"/>
        <end position="143"/>
    </location>
</feature>
<proteinExistence type="inferred from homology"/>
<reference key="1">
    <citation type="journal article" date="2003" name="Proc. Natl. Acad. Sci. U.S.A.">
        <title>The complete genome sequence of Chromobacterium violaceum reveals remarkable and exploitable bacterial adaptability.</title>
        <authorList>
            <person name="Vasconcelos A.T.R."/>
            <person name="de Almeida D.F."/>
            <person name="Hungria M."/>
            <person name="Guimaraes C.T."/>
            <person name="Antonio R.V."/>
            <person name="Almeida F.C."/>
            <person name="de Almeida L.G.P."/>
            <person name="de Almeida R."/>
            <person name="Alves-Gomes J.A."/>
            <person name="Andrade E.M."/>
            <person name="Araripe J."/>
            <person name="de Araujo M.F.F."/>
            <person name="Astolfi-Filho S."/>
            <person name="Azevedo V."/>
            <person name="Baptista A.J."/>
            <person name="Bataus L.A.M."/>
            <person name="Batista J.S."/>
            <person name="Belo A."/>
            <person name="van den Berg C."/>
            <person name="Bogo M."/>
            <person name="Bonatto S."/>
            <person name="Bordignon J."/>
            <person name="Brigido M.M."/>
            <person name="Brito C.A."/>
            <person name="Brocchi M."/>
            <person name="Burity H.A."/>
            <person name="Camargo A.A."/>
            <person name="Cardoso D.D.P."/>
            <person name="Carneiro N.P."/>
            <person name="Carraro D.M."/>
            <person name="Carvalho C.M.B."/>
            <person name="Cascardo J.C.M."/>
            <person name="Cavada B.S."/>
            <person name="Chueire L.M.O."/>
            <person name="Creczynski-Pasa T.B."/>
            <person name="Cunha-Junior N.C."/>
            <person name="Fagundes N."/>
            <person name="Falcao C.L."/>
            <person name="Fantinatti F."/>
            <person name="Farias I.P."/>
            <person name="Felipe M.S.S."/>
            <person name="Ferrari L.P."/>
            <person name="Ferro J.A."/>
            <person name="Ferro M.I.T."/>
            <person name="Franco G.R."/>
            <person name="Freitas N.S.A."/>
            <person name="Furlan L.R."/>
            <person name="Gazzinelli R.T."/>
            <person name="Gomes E.A."/>
            <person name="Goncalves P.R."/>
            <person name="Grangeiro T.B."/>
            <person name="Grattapaglia D."/>
            <person name="Grisard E.C."/>
            <person name="Hanna E.S."/>
            <person name="Jardim S.N."/>
            <person name="Laurino J."/>
            <person name="Leoi L.C.T."/>
            <person name="Lima L.F.A."/>
            <person name="Loureiro M.F."/>
            <person name="Lyra M.C.C.P."/>
            <person name="Madeira H.M.F."/>
            <person name="Manfio G.P."/>
            <person name="Maranhao A.Q."/>
            <person name="Martins W.S."/>
            <person name="di Mauro S.M.Z."/>
            <person name="de Medeiros S.R.B."/>
            <person name="Meissner R.V."/>
            <person name="Moreira M.A.M."/>
            <person name="Nascimento F.F."/>
            <person name="Nicolas M.F."/>
            <person name="Oliveira J.G."/>
            <person name="Oliveira S.C."/>
            <person name="Paixao R.F.C."/>
            <person name="Parente J.A."/>
            <person name="Pedrosa F.O."/>
            <person name="Pena S.D.J."/>
            <person name="Pereira J.O."/>
            <person name="Pereira M."/>
            <person name="Pinto L.S.R.C."/>
            <person name="Pinto L.S."/>
            <person name="Porto J.I.R."/>
            <person name="Potrich D.P."/>
            <person name="Ramalho-Neto C.E."/>
            <person name="Reis A.M.M."/>
            <person name="Rigo L.U."/>
            <person name="Rondinelli E."/>
            <person name="Santos E.B.P."/>
            <person name="Santos F.R."/>
            <person name="Schneider M.P.C."/>
            <person name="Seuanez H.N."/>
            <person name="Silva A.M.R."/>
            <person name="da Silva A.L.C."/>
            <person name="Silva D.W."/>
            <person name="Silva R."/>
            <person name="Simoes I.C."/>
            <person name="Simon D."/>
            <person name="Soares C.M.A."/>
            <person name="Soares R.B.A."/>
            <person name="Souza E.M."/>
            <person name="Souza K.R.L."/>
            <person name="Souza R.C."/>
            <person name="Steffens M.B.R."/>
            <person name="Steindel M."/>
            <person name="Teixeira S.R."/>
            <person name="Urmenyi T."/>
            <person name="Vettore A."/>
            <person name="Wassem R."/>
            <person name="Zaha A."/>
            <person name="Simpson A.J.G."/>
        </authorList>
    </citation>
    <scope>NUCLEOTIDE SEQUENCE [LARGE SCALE GENOMIC DNA]</scope>
    <source>
        <strain>ATCC 12472 / DSM 30191 / JCM 1249 / CCUG 213 / NBRC 12614 / NCIMB 9131 / NCTC 9757 / MK</strain>
    </source>
</reference>
<keyword id="KW-0488">Methylation</keyword>
<keyword id="KW-1185">Reference proteome</keyword>
<keyword id="KW-0687">Ribonucleoprotein</keyword>
<keyword id="KW-0689">Ribosomal protein</keyword>
<keyword id="KW-0694">RNA-binding</keyword>
<keyword id="KW-0699">rRNA-binding</keyword>